<sequence>MRERMHNLVPYVIEQSGGGERSYDIFSRLLKDRIIFVDGEITDAVADLVVAQLLFLESQNPDKDISLYINSPGGAVTAGLAVYDTMQHICPEVQTICLGQASSMAAVLLAGGAPGKRFALPSSRVMIHQPWGGVQGQASDVCIQAQEILRLKTLTIAYFALHTGQSEEQVREDMERDFFLSAEQACSYGIVDTVMKRRKHAQV</sequence>
<dbReference type="EC" id="3.4.21.92" evidence="1"/>
<dbReference type="EMBL" id="AE000520">
    <property type="protein sequence ID" value="AAC65495.1"/>
    <property type="molecule type" value="Genomic_DNA"/>
</dbReference>
<dbReference type="PIR" id="B71314">
    <property type="entry name" value="B71314"/>
</dbReference>
<dbReference type="RefSeq" id="WP_010881956.1">
    <property type="nucleotide sequence ID" value="NC_021490.2"/>
</dbReference>
<dbReference type="SMR" id="O83520"/>
<dbReference type="IntAct" id="O83520">
    <property type="interactions" value="7"/>
</dbReference>
<dbReference type="STRING" id="243276.TP_0507"/>
<dbReference type="MEROPS" id="S14.001"/>
<dbReference type="EnsemblBacteria" id="AAC65495">
    <property type="protein sequence ID" value="AAC65495"/>
    <property type="gene ID" value="TP_0507"/>
</dbReference>
<dbReference type="KEGG" id="tpa:TP_0507"/>
<dbReference type="KEGG" id="tpw:TPANIC_0507"/>
<dbReference type="eggNOG" id="COG0740">
    <property type="taxonomic scope" value="Bacteria"/>
</dbReference>
<dbReference type="HOGENOM" id="CLU_058707_3_2_12"/>
<dbReference type="Proteomes" id="UP000000811">
    <property type="component" value="Chromosome"/>
</dbReference>
<dbReference type="GO" id="GO:0005737">
    <property type="term" value="C:cytoplasm"/>
    <property type="evidence" value="ECO:0007669"/>
    <property type="project" value="UniProtKB-SubCell"/>
</dbReference>
<dbReference type="GO" id="GO:0009368">
    <property type="term" value="C:endopeptidase Clp complex"/>
    <property type="evidence" value="ECO:0007669"/>
    <property type="project" value="TreeGrafter"/>
</dbReference>
<dbReference type="GO" id="GO:0004176">
    <property type="term" value="F:ATP-dependent peptidase activity"/>
    <property type="evidence" value="ECO:0007669"/>
    <property type="project" value="InterPro"/>
</dbReference>
<dbReference type="GO" id="GO:0051117">
    <property type="term" value="F:ATPase binding"/>
    <property type="evidence" value="ECO:0007669"/>
    <property type="project" value="TreeGrafter"/>
</dbReference>
<dbReference type="GO" id="GO:0004252">
    <property type="term" value="F:serine-type endopeptidase activity"/>
    <property type="evidence" value="ECO:0007669"/>
    <property type="project" value="UniProtKB-UniRule"/>
</dbReference>
<dbReference type="GO" id="GO:0006515">
    <property type="term" value="P:protein quality control for misfolded or incompletely synthesized proteins"/>
    <property type="evidence" value="ECO:0007669"/>
    <property type="project" value="TreeGrafter"/>
</dbReference>
<dbReference type="CDD" id="cd07017">
    <property type="entry name" value="S14_ClpP_2"/>
    <property type="match status" value="1"/>
</dbReference>
<dbReference type="FunFam" id="3.90.226.10:FF:000001">
    <property type="entry name" value="ATP-dependent Clp protease proteolytic subunit"/>
    <property type="match status" value="1"/>
</dbReference>
<dbReference type="Gene3D" id="3.90.226.10">
    <property type="entry name" value="2-enoyl-CoA Hydratase, Chain A, domain 1"/>
    <property type="match status" value="1"/>
</dbReference>
<dbReference type="HAMAP" id="MF_00444">
    <property type="entry name" value="ClpP"/>
    <property type="match status" value="1"/>
</dbReference>
<dbReference type="InterPro" id="IPR001907">
    <property type="entry name" value="ClpP"/>
</dbReference>
<dbReference type="InterPro" id="IPR029045">
    <property type="entry name" value="ClpP/crotonase-like_dom_sf"/>
</dbReference>
<dbReference type="InterPro" id="IPR023562">
    <property type="entry name" value="ClpP/TepA"/>
</dbReference>
<dbReference type="InterPro" id="IPR033135">
    <property type="entry name" value="ClpP_His_AS"/>
</dbReference>
<dbReference type="InterPro" id="IPR018215">
    <property type="entry name" value="ClpP_Ser_AS"/>
</dbReference>
<dbReference type="NCBIfam" id="NF001368">
    <property type="entry name" value="PRK00277.1"/>
    <property type="match status" value="1"/>
</dbReference>
<dbReference type="NCBIfam" id="NF009205">
    <property type="entry name" value="PRK12553.1"/>
    <property type="match status" value="1"/>
</dbReference>
<dbReference type="PANTHER" id="PTHR10381">
    <property type="entry name" value="ATP-DEPENDENT CLP PROTEASE PROTEOLYTIC SUBUNIT"/>
    <property type="match status" value="1"/>
</dbReference>
<dbReference type="PANTHER" id="PTHR10381:SF70">
    <property type="entry name" value="ATP-DEPENDENT CLP PROTEASE PROTEOLYTIC SUBUNIT"/>
    <property type="match status" value="1"/>
</dbReference>
<dbReference type="Pfam" id="PF00574">
    <property type="entry name" value="CLP_protease"/>
    <property type="match status" value="1"/>
</dbReference>
<dbReference type="PRINTS" id="PR00127">
    <property type="entry name" value="CLPPROTEASEP"/>
</dbReference>
<dbReference type="SUPFAM" id="SSF52096">
    <property type="entry name" value="ClpP/crotonase"/>
    <property type="match status" value="1"/>
</dbReference>
<dbReference type="PROSITE" id="PS00382">
    <property type="entry name" value="CLP_PROTEASE_HIS"/>
    <property type="match status" value="1"/>
</dbReference>
<dbReference type="PROSITE" id="PS00381">
    <property type="entry name" value="CLP_PROTEASE_SER"/>
    <property type="match status" value="1"/>
</dbReference>
<name>CLPP1_TREPA</name>
<protein>
    <recommendedName>
        <fullName evidence="1">ATP-dependent Clp protease proteolytic subunit 1</fullName>
        <ecNumber evidence="1">3.4.21.92</ecNumber>
    </recommendedName>
    <alternativeName>
        <fullName evidence="1">Endopeptidase Clp 1</fullName>
    </alternativeName>
</protein>
<reference key="1">
    <citation type="journal article" date="1998" name="Science">
        <title>Complete genome sequence of Treponema pallidum, the syphilis spirochete.</title>
        <authorList>
            <person name="Fraser C.M."/>
            <person name="Norris S.J."/>
            <person name="Weinstock G.M."/>
            <person name="White O."/>
            <person name="Sutton G.G."/>
            <person name="Dodson R.J."/>
            <person name="Gwinn M.L."/>
            <person name="Hickey E.K."/>
            <person name="Clayton R.A."/>
            <person name="Ketchum K.A."/>
            <person name="Sodergren E."/>
            <person name="Hardham J.M."/>
            <person name="McLeod M.P."/>
            <person name="Salzberg S.L."/>
            <person name="Peterson J.D."/>
            <person name="Khalak H.G."/>
            <person name="Richardson D.L."/>
            <person name="Howell J.K."/>
            <person name="Chidambaram M."/>
            <person name="Utterback T.R."/>
            <person name="McDonald L.A."/>
            <person name="Artiach P."/>
            <person name="Bowman C."/>
            <person name="Cotton M.D."/>
            <person name="Fujii C."/>
            <person name="Garland S.A."/>
            <person name="Hatch B."/>
            <person name="Horst K."/>
            <person name="Roberts K.M."/>
            <person name="Sandusky M."/>
            <person name="Weidman J.F."/>
            <person name="Smith H.O."/>
            <person name="Venter J.C."/>
        </authorList>
    </citation>
    <scope>NUCLEOTIDE SEQUENCE [LARGE SCALE GENOMIC DNA]</scope>
    <source>
        <strain>Nichols</strain>
    </source>
</reference>
<keyword id="KW-0963">Cytoplasm</keyword>
<keyword id="KW-0378">Hydrolase</keyword>
<keyword id="KW-0645">Protease</keyword>
<keyword id="KW-1185">Reference proteome</keyword>
<keyword id="KW-0720">Serine protease</keyword>
<evidence type="ECO:0000255" key="1">
    <source>
        <dbReference type="HAMAP-Rule" id="MF_00444"/>
    </source>
</evidence>
<comment type="function">
    <text evidence="1">Cleaves peptides in various proteins in a process that requires ATP hydrolysis. Has a chymotrypsin-like activity. Plays a major role in the degradation of misfolded proteins.</text>
</comment>
<comment type="catalytic activity">
    <reaction evidence="1">
        <text>Hydrolysis of proteins to small peptides in the presence of ATP and magnesium. alpha-casein is the usual test substrate. In the absence of ATP, only oligopeptides shorter than five residues are hydrolyzed (such as succinyl-Leu-Tyr-|-NHMec, and Leu-Tyr-Leu-|-Tyr-Trp, in which cleavage of the -Tyr-|-Leu- and -Tyr-|-Trp bonds also occurs).</text>
        <dbReference type="EC" id="3.4.21.92"/>
    </reaction>
</comment>
<comment type="subunit">
    <text evidence="1">Fourteen ClpP subunits assemble into 2 heptameric rings which stack back to back to give a disk-like structure with a central cavity, resembling the structure of eukaryotic proteasomes.</text>
</comment>
<comment type="subcellular location">
    <subcellularLocation>
        <location evidence="1">Cytoplasm</location>
    </subcellularLocation>
</comment>
<comment type="similarity">
    <text evidence="1">Belongs to the peptidase S14 family.</text>
</comment>
<accession>O83520</accession>
<feature type="chain" id="PRO_0000179704" description="ATP-dependent Clp protease proteolytic subunit 1">
    <location>
        <begin position="1"/>
        <end position="203"/>
    </location>
</feature>
<feature type="active site" description="Nucleophile" evidence="1">
    <location>
        <position position="103"/>
    </location>
</feature>
<feature type="active site" evidence="1">
    <location>
        <position position="128"/>
    </location>
</feature>
<organism>
    <name type="scientific">Treponema pallidum (strain Nichols)</name>
    <dbReference type="NCBI Taxonomy" id="243276"/>
    <lineage>
        <taxon>Bacteria</taxon>
        <taxon>Pseudomonadati</taxon>
        <taxon>Spirochaetota</taxon>
        <taxon>Spirochaetia</taxon>
        <taxon>Spirochaetales</taxon>
        <taxon>Treponemataceae</taxon>
        <taxon>Treponema</taxon>
    </lineage>
</organism>
<gene>
    <name evidence="1" type="primary">clpP1</name>
    <name type="synonym">clpP-1</name>
    <name type="ordered locus">TP_0507</name>
</gene>
<proteinExistence type="inferred from homology"/>